<sequence length="150" mass="17390">MATVYDVPGDLLVERVAQRLKEIPEIKPPEWAPFVKTGRHKERLPEQEDWWYYRVASILRRVYIDGPVGIERLRTYYGGRKNRGHAPERFYKAGGSIIRKALQQLEAAGFIEKVPGKGRVVTPKGRSFLDKIATELKKELEEIIPELKKY</sequence>
<gene>
    <name evidence="1" type="primary">rps19e</name>
    <name type="ordered locus">PH1325</name>
</gene>
<dbReference type="EMBL" id="BA000001">
    <property type="protein sequence ID" value="BAA30431.1"/>
    <property type="molecule type" value="Genomic_DNA"/>
</dbReference>
<dbReference type="PIR" id="G71003">
    <property type="entry name" value="G71003"/>
</dbReference>
<dbReference type="RefSeq" id="WP_010885416.1">
    <property type="nucleotide sequence ID" value="NC_000961.1"/>
</dbReference>
<dbReference type="SMR" id="O59041"/>
<dbReference type="STRING" id="70601.gene:9378301"/>
<dbReference type="EnsemblBacteria" id="BAA30431">
    <property type="protein sequence ID" value="BAA30431"/>
    <property type="gene ID" value="BAA30431"/>
</dbReference>
<dbReference type="GeneID" id="1443653"/>
<dbReference type="KEGG" id="pho:PH1325"/>
<dbReference type="eggNOG" id="arCOG01344">
    <property type="taxonomic scope" value="Archaea"/>
</dbReference>
<dbReference type="OrthoDB" id="371836at2157"/>
<dbReference type="Proteomes" id="UP000000752">
    <property type="component" value="Chromosome"/>
</dbReference>
<dbReference type="GO" id="GO:0022627">
    <property type="term" value="C:cytosolic small ribosomal subunit"/>
    <property type="evidence" value="ECO:0007669"/>
    <property type="project" value="TreeGrafter"/>
</dbReference>
<dbReference type="GO" id="GO:0003723">
    <property type="term" value="F:RNA binding"/>
    <property type="evidence" value="ECO:0007669"/>
    <property type="project" value="TreeGrafter"/>
</dbReference>
<dbReference type="GO" id="GO:0003735">
    <property type="term" value="F:structural constituent of ribosome"/>
    <property type="evidence" value="ECO:0007669"/>
    <property type="project" value="InterPro"/>
</dbReference>
<dbReference type="GO" id="GO:0000028">
    <property type="term" value="P:ribosomal small subunit assembly"/>
    <property type="evidence" value="ECO:0007669"/>
    <property type="project" value="TreeGrafter"/>
</dbReference>
<dbReference type="GO" id="GO:0006412">
    <property type="term" value="P:translation"/>
    <property type="evidence" value="ECO:0007669"/>
    <property type="project" value="UniProtKB-UniRule"/>
</dbReference>
<dbReference type="FunFam" id="1.10.10.10:FF:000449">
    <property type="entry name" value="30S ribosomal protein S19e"/>
    <property type="match status" value="1"/>
</dbReference>
<dbReference type="Gene3D" id="1.10.10.10">
    <property type="entry name" value="Winged helix-like DNA-binding domain superfamily/Winged helix DNA-binding domain"/>
    <property type="match status" value="1"/>
</dbReference>
<dbReference type="HAMAP" id="MF_01474">
    <property type="entry name" value="Ribosomal_eS19"/>
    <property type="match status" value="1"/>
</dbReference>
<dbReference type="InterPro" id="IPR001266">
    <property type="entry name" value="Ribosomal_eS19"/>
</dbReference>
<dbReference type="InterPro" id="IPR027548">
    <property type="entry name" value="Ribosomal_eS19_archaeal"/>
</dbReference>
<dbReference type="InterPro" id="IPR018277">
    <property type="entry name" value="Ribosomal_eS19_CS"/>
</dbReference>
<dbReference type="InterPro" id="IPR036388">
    <property type="entry name" value="WH-like_DNA-bd_sf"/>
</dbReference>
<dbReference type="InterPro" id="IPR036390">
    <property type="entry name" value="WH_DNA-bd_sf"/>
</dbReference>
<dbReference type="NCBIfam" id="NF006811">
    <property type="entry name" value="PRK09333.1"/>
    <property type="match status" value="1"/>
</dbReference>
<dbReference type="PANTHER" id="PTHR11710">
    <property type="entry name" value="40S RIBOSOMAL PROTEIN S19"/>
    <property type="match status" value="1"/>
</dbReference>
<dbReference type="PANTHER" id="PTHR11710:SF0">
    <property type="entry name" value="40S RIBOSOMAL PROTEIN S19"/>
    <property type="match status" value="1"/>
</dbReference>
<dbReference type="Pfam" id="PF01090">
    <property type="entry name" value="Ribosomal_S19e"/>
    <property type="match status" value="1"/>
</dbReference>
<dbReference type="SMART" id="SM01413">
    <property type="entry name" value="Ribosomal_S19e"/>
    <property type="match status" value="1"/>
</dbReference>
<dbReference type="SUPFAM" id="SSF46785">
    <property type="entry name" value="Winged helix' DNA-binding domain"/>
    <property type="match status" value="1"/>
</dbReference>
<dbReference type="PROSITE" id="PS00628">
    <property type="entry name" value="RIBOSOMAL_S19E"/>
    <property type="match status" value="1"/>
</dbReference>
<proteinExistence type="inferred from homology"/>
<reference key="1">
    <citation type="journal article" date="1998" name="DNA Res.">
        <title>Complete sequence and gene organization of the genome of a hyper-thermophilic archaebacterium, Pyrococcus horikoshii OT3.</title>
        <authorList>
            <person name="Kawarabayasi Y."/>
            <person name="Sawada M."/>
            <person name="Horikawa H."/>
            <person name="Haikawa Y."/>
            <person name="Hino Y."/>
            <person name="Yamamoto S."/>
            <person name="Sekine M."/>
            <person name="Baba S."/>
            <person name="Kosugi H."/>
            <person name="Hosoyama A."/>
            <person name="Nagai Y."/>
            <person name="Sakai M."/>
            <person name="Ogura K."/>
            <person name="Otsuka R."/>
            <person name="Nakazawa H."/>
            <person name="Takamiya M."/>
            <person name="Ohfuku Y."/>
            <person name="Funahashi T."/>
            <person name="Tanaka T."/>
            <person name="Kudoh Y."/>
            <person name="Yamazaki J."/>
            <person name="Kushida N."/>
            <person name="Oguchi A."/>
            <person name="Aoki K."/>
            <person name="Yoshizawa T."/>
            <person name="Nakamura Y."/>
            <person name="Robb F.T."/>
            <person name="Horikoshi K."/>
            <person name="Masuchi Y."/>
            <person name="Shizuya H."/>
            <person name="Kikuchi H."/>
        </authorList>
    </citation>
    <scope>NUCLEOTIDE SEQUENCE [LARGE SCALE GENOMIC DNA]</scope>
    <source>
        <strain>ATCC 700860 / DSM 12428 / JCM 9974 / NBRC 100139 / OT-3</strain>
    </source>
</reference>
<keyword id="KW-0687">Ribonucleoprotein</keyword>
<keyword id="KW-0689">Ribosomal protein</keyword>
<protein>
    <recommendedName>
        <fullName evidence="1">Small ribosomal subunit protein eS19</fullName>
    </recommendedName>
    <alternativeName>
        <fullName evidence="2">30S ribosomal protein S19e</fullName>
    </alternativeName>
</protein>
<name>RS19E_PYRHO</name>
<evidence type="ECO:0000255" key="1">
    <source>
        <dbReference type="HAMAP-Rule" id="MF_01474"/>
    </source>
</evidence>
<evidence type="ECO:0000305" key="2"/>
<accession>O59041</accession>
<feature type="chain" id="PRO_0000153842" description="Small ribosomal subunit protein eS19">
    <location>
        <begin position="1"/>
        <end position="150"/>
    </location>
</feature>
<comment type="function">
    <text evidence="1">May be involved in maturation of the 30S ribosomal subunit.</text>
</comment>
<comment type="subunit">
    <text evidence="1">Part of the 30S ribosomal subunit.</text>
</comment>
<comment type="similarity">
    <text evidence="1">Belongs to the eukaryotic ribosomal protein eS19 family.</text>
</comment>
<organism>
    <name type="scientific">Pyrococcus horikoshii (strain ATCC 700860 / DSM 12428 / JCM 9974 / NBRC 100139 / OT-3)</name>
    <dbReference type="NCBI Taxonomy" id="70601"/>
    <lineage>
        <taxon>Archaea</taxon>
        <taxon>Methanobacteriati</taxon>
        <taxon>Methanobacteriota</taxon>
        <taxon>Thermococci</taxon>
        <taxon>Thermococcales</taxon>
        <taxon>Thermococcaceae</taxon>
        <taxon>Pyrococcus</taxon>
    </lineage>
</organism>